<gene>
    <name evidence="1" type="primary">trpA</name>
</gene>
<accession>Q9TLW8</accession>
<comment type="function">
    <text evidence="1">The alpha subunit is responsible for the aldol cleavage of indoleglycerol phosphate to indole and glyceraldehyde 3-phosphate.</text>
</comment>
<comment type="catalytic activity">
    <reaction evidence="1">
        <text>(1S,2R)-1-C-(indol-3-yl)glycerol 3-phosphate + L-serine = D-glyceraldehyde 3-phosphate + L-tryptophan + H2O</text>
        <dbReference type="Rhea" id="RHEA:10532"/>
        <dbReference type="ChEBI" id="CHEBI:15377"/>
        <dbReference type="ChEBI" id="CHEBI:33384"/>
        <dbReference type="ChEBI" id="CHEBI:57912"/>
        <dbReference type="ChEBI" id="CHEBI:58866"/>
        <dbReference type="ChEBI" id="CHEBI:59776"/>
        <dbReference type="EC" id="4.2.1.20"/>
    </reaction>
</comment>
<comment type="pathway">
    <text evidence="1">Amino-acid biosynthesis; L-tryptophan biosynthesis; L-tryptophan from chorismate: step 5/5.</text>
</comment>
<comment type="subunit">
    <text evidence="1">Tetramer of two alpha and two beta chains.</text>
</comment>
<comment type="subcellular location">
    <subcellularLocation>
        <location>Plastid</location>
        <location>Chloroplast</location>
    </subcellularLocation>
</comment>
<comment type="similarity">
    <text evidence="1">Belongs to the TrpA family.</text>
</comment>
<reference key="1">
    <citation type="journal article" date="2000" name="J. Mol. Evol.">
        <title>The structure and gene repertoire of an ancient red algal plastid genome.</title>
        <authorList>
            <person name="Gloeckner G."/>
            <person name="Rosenthal A."/>
            <person name="Valentin K.-U."/>
        </authorList>
    </citation>
    <scope>NUCLEOTIDE SEQUENCE [LARGE SCALE GENOMIC DNA]</scope>
    <source>
        <strain>RK-1</strain>
    </source>
</reference>
<proteinExistence type="inferred from homology"/>
<protein>
    <recommendedName>
        <fullName evidence="1">Tryptophan synthase alpha chain</fullName>
        <ecNumber evidence="1">4.2.1.20</ecNumber>
    </recommendedName>
</protein>
<evidence type="ECO:0000255" key="1">
    <source>
        <dbReference type="HAMAP-Rule" id="MF_00131"/>
    </source>
</evidence>
<organism>
    <name type="scientific">Cyanidium caldarium</name>
    <name type="common">Red alga</name>
    <dbReference type="NCBI Taxonomy" id="2771"/>
    <lineage>
        <taxon>Eukaryota</taxon>
        <taxon>Rhodophyta</taxon>
        <taxon>Bangiophyceae</taxon>
        <taxon>Cyanidiales</taxon>
        <taxon>Cyanidiaceae</taxon>
        <taxon>Cyanidium</taxon>
    </lineage>
</organism>
<geneLocation type="chloroplast"/>
<dbReference type="EC" id="4.2.1.20" evidence="1"/>
<dbReference type="EMBL" id="AF022186">
    <property type="protein sequence ID" value="AAF12944.1"/>
    <property type="molecule type" value="Genomic_DNA"/>
</dbReference>
<dbReference type="RefSeq" id="NP_045150.1">
    <property type="nucleotide sequence ID" value="NC_001840.1"/>
</dbReference>
<dbReference type="SMR" id="Q9TLW8"/>
<dbReference type="GeneID" id="800124"/>
<dbReference type="UniPathway" id="UPA00035">
    <property type="reaction ID" value="UER00044"/>
</dbReference>
<dbReference type="GO" id="GO:0009507">
    <property type="term" value="C:chloroplast"/>
    <property type="evidence" value="ECO:0007669"/>
    <property type="project" value="UniProtKB-SubCell"/>
</dbReference>
<dbReference type="GO" id="GO:0005829">
    <property type="term" value="C:cytosol"/>
    <property type="evidence" value="ECO:0007669"/>
    <property type="project" value="TreeGrafter"/>
</dbReference>
<dbReference type="GO" id="GO:0004834">
    <property type="term" value="F:tryptophan synthase activity"/>
    <property type="evidence" value="ECO:0007669"/>
    <property type="project" value="UniProtKB-UniRule"/>
</dbReference>
<dbReference type="CDD" id="cd04724">
    <property type="entry name" value="Tryptophan_synthase_alpha"/>
    <property type="match status" value="1"/>
</dbReference>
<dbReference type="Gene3D" id="3.20.20.70">
    <property type="entry name" value="Aldolase class I"/>
    <property type="match status" value="1"/>
</dbReference>
<dbReference type="HAMAP" id="MF_00131">
    <property type="entry name" value="Trp_synth_alpha"/>
    <property type="match status" value="1"/>
</dbReference>
<dbReference type="InterPro" id="IPR013785">
    <property type="entry name" value="Aldolase_TIM"/>
</dbReference>
<dbReference type="InterPro" id="IPR011060">
    <property type="entry name" value="RibuloseP-bd_barrel"/>
</dbReference>
<dbReference type="InterPro" id="IPR018204">
    <property type="entry name" value="Trp_synthase_alpha_AS"/>
</dbReference>
<dbReference type="InterPro" id="IPR002028">
    <property type="entry name" value="Trp_synthase_suA"/>
</dbReference>
<dbReference type="NCBIfam" id="TIGR00262">
    <property type="entry name" value="trpA"/>
    <property type="match status" value="1"/>
</dbReference>
<dbReference type="PANTHER" id="PTHR43406:SF1">
    <property type="entry name" value="TRYPTOPHAN SYNTHASE ALPHA CHAIN, CHLOROPLASTIC"/>
    <property type="match status" value="1"/>
</dbReference>
<dbReference type="PANTHER" id="PTHR43406">
    <property type="entry name" value="TRYPTOPHAN SYNTHASE, ALPHA CHAIN"/>
    <property type="match status" value="1"/>
</dbReference>
<dbReference type="Pfam" id="PF00290">
    <property type="entry name" value="Trp_syntA"/>
    <property type="match status" value="1"/>
</dbReference>
<dbReference type="SUPFAM" id="SSF51366">
    <property type="entry name" value="Ribulose-phoshate binding barrel"/>
    <property type="match status" value="1"/>
</dbReference>
<dbReference type="PROSITE" id="PS00167">
    <property type="entry name" value="TRP_SYNTHASE_ALPHA"/>
    <property type="match status" value="1"/>
</dbReference>
<name>TRPA1_CYACA</name>
<sequence>MKNSIKNIFESERGLLLLPFVSLGTPNTQINKQAIIAMDKNGANIIELGIPYSDPVADGPVIQDAYNKAIKNGVNIRKAFKILMNLKGKIKSPIIVFIYYNQLLNYGINKFLEKLIQLEVQGIIVPDLPYDESQILKKKCTINNIALISLIALTSSFSRIKKIARNAEGFLYLISKTGVTGGTGKLMNKLKIIIKTIQKLTSKPVVVGFGINSRRQIKQLIEWNSNGIVIGSPCVQILLQSSKEVCVIKLSGLIKQIKESTSSTSN</sequence>
<keyword id="KW-0028">Amino-acid biosynthesis</keyword>
<keyword id="KW-0057">Aromatic amino acid biosynthesis</keyword>
<keyword id="KW-0150">Chloroplast</keyword>
<keyword id="KW-0456">Lyase</keyword>
<keyword id="KW-0934">Plastid</keyword>
<keyword id="KW-0822">Tryptophan biosynthesis</keyword>
<feature type="chain" id="PRO_0000098903" description="Tryptophan synthase alpha chain">
    <location>
        <begin position="1"/>
        <end position="266"/>
    </location>
</feature>
<feature type="active site" description="Proton acceptor" evidence="1">
    <location>
        <position position="47"/>
    </location>
</feature>
<feature type="active site" description="Proton acceptor" evidence="1">
    <location>
        <position position="58"/>
    </location>
</feature>